<organism>
    <name type="scientific">Staphylococcus aureus (strain MW2)</name>
    <dbReference type="NCBI Taxonomy" id="196620"/>
    <lineage>
        <taxon>Bacteria</taxon>
        <taxon>Bacillati</taxon>
        <taxon>Bacillota</taxon>
        <taxon>Bacilli</taxon>
        <taxon>Bacillales</taxon>
        <taxon>Staphylococcaceae</taxon>
        <taxon>Staphylococcus</taxon>
    </lineage>
</organism>
<reference key="1">
    <citation type="journal article" date="2002" name="Lancet">
        <title>Genome and virulence determinants of high virulence community-acquired MRSA.</title>
        <authorList>
            <person name="Baba T."/>
            <person name="Takeuchi F."/>
            <person name="Kuroda M."/>
            <person name="Yuzawa H."/>
            <person name="Aoki K."/>
            <person name="Oguchi A."/>
            <person name="Nagai Y."/>
            <person name="Iwama N."/>
            <person name="Asano K."/>
            <person name="Naimi T."/>
            <person name="Kuroda H."/>
            <person name="Cui L."/>
            <person name="Yamamoto K."/>
            <person name="Hiramatsu K."/>
        </authorList>
    </citation>
    <scope>NUCLEOTIDE SEQUENCE [LARGE SCALE GENOMIC DNA]</scope>
    <source>
        <strain>MW2</strain>
    </source>
</reference>
<protein>
    <recommendedName>
        <fullName evidence="1">Chaperone protein DnaK</fullName>
    </recommendedName>
    <alternativeName>
        <fullName evidence="1">HSP70</fullName>
    </alternativeName>
    <alternativeName>
        <fullName evidence="1">Heat shock 70 kDa protein</fullName>
    </alternativeName>
    <alternativeName>
        <fullName evidence="1">Heat shock protein 70</fullName>
    </alternativeName>
</protein>
<gene>
    <name evidence="1" type="primary">dnaK</name>
    <name type="ordered locus">MW1532</name>
</gene>
<name>DNAK_STAAW</name>
<feature type="chain" id="PRO_0000078541" description="Chaperone protein DnaK">
    <location>
        <begin position="1"/>
        <end position="610"/>
    </location>
</feature>
<feature type="region of interest" description="Disordered" evidence="2">
    <location>
        <begin position="525"/>
        <end position="544"/>
    </location>
</feature>
<feature type="region of interest" description="Disordered" evidence="2">
    <location>
        <begin position="576"/>
        <end position="610"/>
    </location>
</feature>
<feature type="compositionally biased region" description="Basic and acidic residues" evidence="2">
    <location>
        <begin position="529"/>
        <end position="542"/>
    </location>
</feature>
<feature type="compositionally biased region" description="Low complexity" evidence="2">
    <location>
        <begin position="576"/>
        <end position="592"/>
    </location>
</feature>
<feature type="compositionally biased region" description="Basic and acidic residues" evidence="2">
    <location>
        <begin position="599"/>
        <end position="610"/>
    </location>
</feature>
<feature type="modified residue" description="Phosphothreonine; by autocatalysis" evidence="1">
    <location>
        <position position="173"/>
    </location>
</feature>
<sequence length="610" mass="66361">MSKIIGIDLGTTNSCVTVLEGDEPKVIQNPEGSRTTPSVVAFKNGETQVGEVAKRQAITNPNTVQSIKRHMGTDYKVDIEGKSYTPQEISAMILQNLKNTAESYLGEKVDKAVITVPAYFNDAERQATKDAGKIAGLEVERIINEPTAAALAYGLDKTDKDEKVLVFDLGGGTFDVSILELGDGVFEVLSTAGDNKLGGDDFDQVIIDYLVAEFKKENGVDLSQDKMALQRLKDAAEKAKKDLSGVSQTQISLPFISAGENGPLHLEVNLTRSKFEELSDSLIRRTMEPTRQAMKDAGLTNSDIDEVILVGGSTRIPAVQEAVKKEIGKEPNKGVNPDEVVAMGAAIQGGVITGDVKDVVLLDVTPLSLGIEILGGRMNTLIERNTTIPTSKSQIYSTAVDNQPSVDVHVLQGERPMAADNKTLGRFQLTDIPPAERGKPQIEVTFDIDKNGIVNVTAKDLGTNKEQRITIQSSSSLSDEEIDRMVKDAEVNAEADKKRREEVDLRNEADSLVFQVEKTLTDLGENIGEEDKKSAEEKKDALKTALEGQDIEDIKSKKEELEKVIQELSAKVYEQAAQQQQQAQGANAGQNNDSTVEDAEFKEVKDDDKK</sequence>
<evidence type="ECO:0000255" key="1">
    <source>
        <dbReference type="HAMAP-Rule" id="MF_00332"/>
    </source>
</evidence>
<evidence type="ECO:0000256" key="2">
    <source>
        <dbReference type="SAM" id="MobiDB-lite"/>
    </source>
</evidence>
<accession>P64408</accession>
<accession>Q99TR7</accession>
<dbReference type="EMBL" id="BA000033">
    <property type="protein sequence ID" value="BAB95397.1"/>
    <property type="molecule type" value="Genomic_DNA"/>
</dbReference>
<dbReference type="RefSeq" id="WP_000034716.1">
    <property type="nucleotide sequence ID" value="NC_003923.1"/>
</dbReference>
<dbReference type="SMR" id="P64408"/>
<dbReference type="KEGG" id="sam:MW1532"/>
<dbReference type="HOGENOM" id="CLU_005965_2_4_9"/>
<dbReference type="GO" id="GO:0005524">
    <property type="term" value="F:ATP binding"/>
    <property type="evidence" value="ECO:0007669"/>
    <property type="project" value="UniProtKB-UniRule"/>
</dbReference>
<dbReference type="GO" id="GO:0140662">
    <property type="term" value="F:ATP-dependent protein folding chaperone"/>
    <property type="evidence" value="ECO:0007669"/>
    <property type="project" value="InterPro"/>
</dbReference>
<dbReference type="GO" id="GO:0051082">
    <property type="term" value="F:unfolded protein binding"/>
    <property type="evidence" value="ECO:0007669"/>
    <property type="project" value="InterPro"/>
</dbReference>
<dbReference type="CDD" id="cd10234">
    <property type="entry name" value="ASKHA_NBD_HSP70_DnaK-like"/>
    <property type="match status" value="1"/>
</dbReference>
<dbReference type="FunFam" id="2.60.34.10:FF:000014">
    <property type="entry name" value="Chaperone protein DnaK HSP70"/>
    <property type="match status" value="1"/>
</dbReference>
<dbReference type="FunFam" id="1.20.1270.10:FF:000001">
    <property type="entry name" value="Molecular chaperone DnaK"/>
    <property type="match status" value="1"/>
</dbReference>
<dbReference type="FunFam" id="3.30.420.40:FF:000071">
    <property type="entry name" value="Molecular chaperone DnaK"/>
    <property type="match status" value="1"/>
</dbReference>
<dbReference type="FunFam" id="3.90.640.10:FF:000003">
    <property type="entry name" value="Molecular chaperone DnaK"/>
    <property type="match status" value="1"/>
</dbReference>
<dbReference type="Gene3D" id="1.20.1270.10">
    <property type="match status" value="1"/>
</dbReference>
<dbReference type="Gene3D" id="3.30.420.40">
    <property type="match status" value="2"/>
</dbReference>
<dbReference type="Gene3D" id="3.90.640.10">
    <property type="entry name" value="Actin, Chain A, domain 4"/>
    <property type="match status" value="1"/>
</dbReference>
<dbReference type="Gene3D" id="2.60.34.10">
    <property type="entry name" value="Substrate Binding Domain Of DNAk, Chain A, domain 1"/>
    <property type="match status" value="1"/>
</dbReference>
<dbReference type="HAMAP" id="MF_00332">
    <property type="entry name" value="DnaK"/>
    <property type="match status" value="1"/>
</dbReference>
<dbReference type="InterPro" id="IPR043129">
    <property type="entry name" value="ATPase_NBD"/>
</dbReference>
<dbReference type="InterPro" id="IPR012725">
    <property type="entry name" value="Chaperone_DnaK"/>
</dbReference>
<dbReference type="InterPro" id="IPR018181">
    <property type="entry name" value="Heat_shock_70_CS"/>
</dbReference>
<dbReference type="InterPro" id="IPR029048">
    <property type="entry name" value="HSP70_C_sf"/>
</dbReference>
<dbReference type="InterPro" id="IPR029047">
    <property type="entry name" value="HSP70_peptide-bd_sf"/>
</dbReference>
<dbReference type="InterPro" id="IPR013126">
    <property type="entry name" value="Hsp_70_fam"/>
</dbReference>
<dbReference type="NCBIfam" id="NF001413">
    <property type="entry name" value="PRK00290.1"/>
    <property type="match status" value="1"/>
</dbReference>
<dbReference type="NCBIfam" id="TIGR02350">
    <property type="entry name" value="prok_dnaK"/>
    <property type="match status" value="1"/>
</dbReference>
<dbReference type="PANTHER" id="PTHR19375">
    <property type="entry name" value="HEAT SHOCK PROTEIN 70KDA"/>
    <property type="match status" value="1"/>
</dbReference>
<dbReference type="Pfam" id="PF00012">
    <property type="entry name" value="HSP70"/>
    <property type="match status" value="1"/>
</dbReference>
<dbReference type="PRINTS" id="PR00301">
    <property type="entry name" value="HEATSHOCK70"/>
</dbReference>
<dbReference type="SUPFAM" id="SSF53067">
    <property type="entry name" value="Actin-like ATPase domain"/>
    <property type="match status" value="2"/>
</dbReference>
<dbReference type="SUPFAM" id="SSF100934">
    <property type="entry name" value="Heat shock protein 70kD (HSP70), C-terminal subdomain"/>
    <property type="match status" value="1"/>
</dbReference>
<dbReference type="SUPFAM" id="SSF100920">
    <property type="entry name" value="Heat shock protein 70kD (HSP70), peptide-binding domain"/>
    <property type="match status" value="1"/>
</dbReference>
<dbReference type="PROSITE" id="PS00297">
    <property type="entry name" value="HSP70_1"/>
    <property type="match status" value="1"/>
</dbReference>
<dbReference type="PROSITE" id="PS00329">
    <property type="entry name" value="HSP70_2"/>
    <property type="match status" value="1"/>
</dbReference>
<dbReference type="PROSITE" id="PS01036">
    <property type="entry name" value="HSP70_3"/>
    <property type="match status" value="1"/>
</dbReference>
<comment type="function">
    <text evidence="1">Acts as a chaperone.</text>
</comment>
<comment type="induction">
    <text evidence="1">By stress conditions e.g. heat shock.</text>
</comment>
<comment type="similarity">
    <text evidence="1">Belongs to the heat shock protein 70 family.</text>
</comment>
<proteinExistence type="inferred from homology"/>
<keyword id="KW-0067">ATP-binding</keyword>
<keyword id="KW-0143">Chaperone</keyword>
<keyword id="KW-0547">Nucleotide-binding</keyword>
<keyword id="KW-0597">Phosphoprotein</keyword>
<keyword id="KW-0346">Stress response</keyword>